<comment type="function">
    <text evidence="2 3">Transcriptional repressor which binds preferentially to the canonical E box sequence 5'-CACGTG-3'. Downstream effector of Notch signaling required for cardiovascular development. Specifically required for the Notch-induced endocardial epithelial to mesenchymal transition, which is itself criticial for cardiac valve and septum development. May be required in conjunction with HEY2 to specify arterial cell fate or identity. Promotes maintenance of neuronal precursor cells and glial versus neuronal fate specification. Represses transcription by the cardiac transcriptional activators GATA4 and GATA6 and by the neuronal bHLH factors ASCL1/MASH1 and NEUROD4/MATH3.</text>
</comment>
<comment type="subunit">
    <text evidence="1">Self-associates. Interacts with HES1 and HEYL. Interacts with HDAC1, NCOR1 and SIN3A. Interacts with GATA4 and GATA6. Interacts with CCDC89/BOIP.</text>
</comment>
<comment type="subcellular location">
    <subcellularLocation>
        <location evidence="4 5">Nucleus</location>
    </subcellularLocation>
</comment>
<comment type="similarity">
    <text evidence="7">Belongs to the HEY family.</text>
</comment>
<protein>
    <recommendedName>
        <fullName>Hairy/enhancer-of-split related with YRPW motif protein 1</fullName>
    </recommendedName>
</protein>
<gene>
    <name type="primary">HEY1</name>
</gene>
<keyword id="KW-0217">Developmental protein</keyword>
<keyword id="KW-0238">DNA-binding</keyword>
<keyword id="KW-0914">Notch signaling pathway</keyword>
<keyword id="KW-0539">Nucleus</keyword>
<keyword id="KW-1185">Reference proteome</keyword>
<keyword id="KW-0678">Repressor</keyword>
<keyword id="KW-0804">Transcription</keyword>
<keyword id="KW-0805">Transcription regulation</keyword>
<feature type="chain" id="PRO_0000269176" description="Hairy/enhancer-of-split related with YRPW motif protein 1">
    <location>
        <begin position="1"/>
        <end position="304"/>
    </location>
</feature>
<feature type="domain" description="bHLH" evidence="5">
    <location>
        <begin position="49"/>
        <end position="104"/>
    </location>
</feature>
<feature type="domain" description="Orange" evidence="4">
    <location>
        <begin position="122"/>
        <end position="158"/>
    </location>
</feature>
<feature type="region of interest" description="Disordered" evidence="6">
    <location>
        <begin position="1"/>
        <end position="52"/>
    </location>
</feature>
<feature type="region of interest" description="Transcriptional repression and interaction with NCOR1 and SIN3A" evidence="1">
    <location>
        <begin position="48"/>
        <end position="117"/>
    </location>
</feature>
<feature type="region of interest" description="Disordered" evidence="6">
    <location>
        <begin position="197"/>
        <end position="234"/>
    </location>
</feature>
<feature type="short sequence motif" description="YRPW motif">
    <location>
        <begin position="294"/>
        <end position="297"/>
    </location>
</feature>
<feature type="compositionally biased region" description="Polar residues" evidence="6">
    <location>
        <begin position="28"/>
        <end position="47"/>
    </location>
</feature>
<feature type="compositionally biased region" description="Polar residues" evidence="6">
    <location>
        <begin position="197"/>
        <end position="211"/>
    </location>
</feature>
<organism>
    <name type="scientific">Bos taurus</name>
    <name type="common">Bovine</name>
    <dbReference type="NCBI Taxonomy" id="9913"/>
    <lineage>
        <taxon>Eukaryota</taxon>
        <taxon>Metazoa</taxon>
        <taxon>Chordata</taxon>
        <taxon>Craniata</taxon>
        <taxon>Vertebrata</taxon>
        <taxon>Euteleostomi</taxon>
        <taxon>Mammalia</taxon>
        <taxon>Eutheria</taxon>
        <taxon>Laurasiatheria</taxon>
        <taxon>Artiodactyla</taxon>
        <taxon>Ruminantia</taxon>
        <taxon>Pecora</taxon>
        <taxon>Bovidae</taxon>
        <taxon>Bovinae</taxon>
        <taxon>Bos</taxon>
    </lineage>
</organism>
<dbReference type="EMBL" id="BC112574">
    <property type="protein sequence ID" value="AAI12575.1"/>
    <property type="molecule type" value="mRNA"/>
</dbReference>
<dbReference type="RefSeq" id="NP_001001172.2">
    <property type="nucleotide sequence ID" value="NM_001001172.3"/>
</dbReference>
<dbReference type="SMR" id="Q2KIN4"/>
<dbReference type="FunCoup" id="Q2KIN4">
    <property type="interactions" value="127"/>
</dbReference>
<dbReference type="STRING" id="9913.ENSBTAP00000020864"/>
<dbReference type="PaxDb" id="9913-ENSBTAP00000020864"/>
<dbReference type="GeneID" id="408005"/>
<dbReference type="KEGG" id="bta:408005"/>
<dbReference type="CTD" id="23462"/>
<dbReference type="VEuPathDB" id="HostDB:ENSBTAG00000015717"/>
<dbReference type="eggNOG" id="KOG4304">
    <property type="taxonomic scope" value="Eukaryota"/>
</dbReference>
<dbReference type="HOGENOM" id="CLU_048294_2_0_1"/>
<dbReference type="InParanoid" id="Q2KIN4"/>
<dbReference type="OMA" id="QIPWGGA"/>
<dbReference type="OrthoDB" id="6371181at2759"/>
<dbReference type="TreeFam" id="TF323617"/>
<dbReference type="Proteomes" id="UP000009136">
    <property type="component" value="Chromosome 14"/>
</dbReference>
<dbReference type="Bgee" id="ENSBTAG00000015717">
    <property type="expression patterns" value="Expressed in floor plate of diencephalon and 102 other cell types or tissues"/>
</dbReference>
<dbReference type="GO" id="GO:0005634">
    <property type="term" value="C:nucleus"/>
    <property type="evidence" value="ECO:0000318"/>
    <property type="project" value="GO_Central"/>
</dbReference>
<dbReference type="GO" id="GO:0046983">
    <property type="term" value="F:protein dimerization activity"/>
    <property type="evidence" value="ECO:0007669"/>
    <property type="project" value="InterPro"/>
</dbReference>
<dbReference type="GO" id="GO:0000978">
    <property type="term" value="F:RNA polymerase II cis-regulatory region sequence-specific DNA binding"/>
    <property type="evidence" value="ECO:0000318"/>
    <property type="project" value="GO_Central"/>
</dbReference>
<dbReference type="GO" id="GO:0072359">
    <property type="term" value="P:circulatory system development"/>
    <property type="evidence" value="ECO:0000318"/>
    <property type="project" value="GO_Central"/>
</dbReference>
<dbReference type="GO" id="GO:0045665">
    <property type="term" value="P:negative regulation of neuron differentiation"/>
    <property type="evidence" value="ECO:0000318"/>
    <property type="project" value="GO_Central"/>
</dbReference>
<dbReference type="GO" id="GO:0007219">
    <property type="term" value="P:Notch signaling pathway"/>
    <property type="evidence" value="ECO:0000250"/>
    <property type="project" value="UniProtKB"/>
</dbReference>
<dbReference type="GO" id="GO:0006355">
    <property type="term" value="P:regulation of DNA-templated transcription"/>
    <property type="evidence" value="ECO:0007669"/>
    <property type="project" value="InterPro"/>
</dbReference>
<dbReference type="GO" id="GO:0050767">
    <property type="term" value="P:regulation of neurogenesis"/>
    <property type="evidence" value="ECO:0000318"/>
    <property type="project" value="GO_Central"/>
</dbReference>
<dbReference type="FunFam" id="4.10.280.10:FF:000012">
    <property type="entry name" value="hairy/enhancer-of-split related with YRPW motif protein 1"/>
    <property type="match status" value="1"/>
</dbReference>
<dbReference type="Gene3D" id="6.10.250.980">
    <property type="match status" value="1"/>
</dbReference>
<dbReference type="Gene3D" id="4.10.280.10">
    <property type="entry name" value="Helix-loop-helix DNA-binding domain"/>
    <property type="match status" value="1"/>
</dbReference>
<dbReference type="InterPro" id="IPR011598">
    <property type="entry name" value="bHLH_dom"/>
</dbReference>
<dbReference type="InterPro" id="IPR050370">
    <property type="entry name" value="HES_HEY"/>
</dbReference>
<dbReference type="InterPro" id="IPR036638">
    <property type="entry name" value="HLH_DNA-bd_sf"/>
</dbReference>
<dbReference type="InterPro" id="IPR003650">
    <property type="entry name" value="Orange_dom"/>
</dbReference>
<dbReference type="PANTHER" id="PTHR10985">
    <property type="entry name" value="BASIC HELIX-LOOP-HELIX TRANSCRIPTION FACTOR, HES-RELATED"/>
    <property type="match status" value="1"/>
</dbReference>
<dbReference type="Pfam" id="PF07527">
    <property type="entry name" value="Hairy_orange"/>
    <property type="match status" value="1"/>
</dbReference>
<dbReference type="Pfam" id="PF00010">
    <property type="entry name" value="HLH"/>
    <property type="match status" value="1"/>
</dbReference>
<dbReference type="SMART" id="SM00353">
    <property type="entry name" value="HLH"/>
    <property type="match status" value="1"/>
</dbReference>
<dbReference type="SMART" id="SM00511">
    <property type="entry name" value="ORANGE"/>
    <property type="match status" value="1"/>
</dbReference>
<dbReference type="SUPFAM" id="SSF47459">
    <property type="entry name" value="HLH, helix-loop-helix DNA-binding domain"/>
    <property type="match status" value="1"/>
</dbReference>
<dbReference type="SUPFAM" id="SSF158457">
    <property type="entry name" value="Orange domain-like"/>
    <property type="match status" value="1"/>
</dbReference>
<dbReference type="PROSITE" id="PS50888">
    <property type="entry name" value="BHLH"/>
    <property type="match status" value="1"/>
</dbReference>
<dbReference type="PROSITE" id="PS51054">
    <property type="entry name" value="ORANGE"/>
    <property type="match status" value="1"/>
</dbReference>
<name>HEY1_BOVIN</name>
<accession>Q2KIN4</accession>
<evidence type="ECO:0000250" key="1"/>
<evidence type="ECO:0000250" key="2">
    <source>
        <dbReference type="UniProtKB" id="Q9WV93"/>
    </source>
</evidence>
<evidence type="ECO:0000250" key="3">
    <source>
        <dbReference type="UniProtKB" id="Q9Y5J3"/>
    </source>
</evidence>
<evidence type="ECO:0000255" key="4">
    <source>
        <dbReference type="PROSITE-ProRule" id="PRU00380"/>
    </source>
</evidence>
<evidence type="ECO:0000255" key="5">
    <source>
        <dbReference type="PROSITE-ProRule" id="PRU00981"/>
    </source>
</evidence>
<evidence type="ECO:0000256" key="6">
    <source>
        <dbReference type="SAM" id="MobiDB-lite"/>
    </source>
</evidence>
<evidence type="ECO:0000305" key="7"/>
<proteinExistence type="evidence at transcript level"/>
<sequence length="304" mass="32572">MKRAHPEYSSSESELDETIEVEKESADENGNLSSALGSMSPTTSSQILARKRRRGIIEKRRRDRINNSLSELRRLVPSAFEKQGSAKLEKAEILQMTVDHLKMLHTAGGKGYFDAHALAMDYRSLGFRECLAEVARYLSIIEGLDASDPLRVRLVSHLNNYASQREAASGAHAGLGHIPWGSAFGHHPHVAHPLLLSQSTHGNTGTSASPTESHHQGRLATAHPEASALRAPPSGGLGPVLPVVTSASKLSPPLLSSVASLSAFPFSFGSFHLLSPNALSPSAPTQAANLGKPYRPWGTEIGAF</sequence>
<reference key="1">
    <citation type="submission" date="2006-01" db="EMBL/GenBank/DDBJ databases">
        <authorList>
            <consortium name="NIH - Mammalian Gene Collection (MGC) project"/>
        </authorList>
    </citation>
    <scope>NUCLEOTIDE SEQUENCE [LARGE SCALE MRNA]</scope>
    <source>
        <strain>Hereford</strain>
        <tissue>Hypothalamus</tissue>
    </source>
</reference>